<accession>P05143</accession>
<accession>Q62103</accession>
<accession>Q62106</accession>
<keyword id="KW-0025">Alternative splicing</keyword>
<keyword id="KW-0325">Glycoprotein</keyword>
<keyword id="KW-1185">Reference proteome</keyword>
<keyword id="KW-0677">Repeat</keyword>
<keyword id="KW-0964">Secreted</keyword>
<keyword id="KW-0732">Signal</keyword>
<protein>
    <recommendedName>
        <fullName>Proline-rich protein 2</fullName>
    </recommendedName>
    <alternativeName>
        <fullName>Proline-rich protein MP-3</fullName>
    </alternativeName>
</protein>
<feature type="signal peptide" evidence="1">
    <location>
        <begin position="1"/>
        <end position="16"/>
    </location>
</feature>
<feature type="chain" id="PRO_0000058467" description="Proline-rich protein 2">
    <location>
        <begin position="17"/>
        <end position="317"/>
    </location>
</feature>
<feature type="region of interest" description="Disordered" evidence="2">
    <location>
        <begin position="15"/>
        <end position="317"/>
    </location>
</feature>
<feature type="compositionally biased region" description="Pro residues" evidence="2">
    <location>
        <begin position="32"/>
        <end position="44"/>
    </location>
</feature>
<feature type="compositionally biased region" description="Pro residues" evidence="2">
    <location>
        <begin position="51"/>
        <end position="183"/>
    </location>
</feature>
<feature type="compositionally biased region" description="Pro residues" evidence="2">
    <location>
        <begin position="204"/>
        <end position="288"/>
    </location>
</feature>
<feature type="compositionally biased region" description="Low complexity" evidence="2">
    <location>
        <begin position="289"/>
        <end position="305"/>
    </location>
</feature>
<feature type="compositionally biased region" description="Pro residues" evidence="2">
    <location>
        <begin position="306"/>
        <end position="317"/>
    </location>
</feature>
<feature type="glycosylation site" description="N-linked (GlcNAc...) asparagine" evidence="1">
    <location>
        <position position="46"/>
    </location>
</feature>
<feature type="splice variant" id="VSP_026929" description="In isoform 2." evidence="3">
    <location>
        <begin position="176"/>
        <end position="189"/>
    </location>
</feature>
<feature type="sequence conflict" description="In Ref. 3; AAA40002." evidence="4" ref="3">
    <original>P</original>
    <variation>Q</variation>
    <location>
        <position position="122"/>
    </location>
</feature>
<feature type="sequence conflict" description="In Ref. 2; AAA40005." evidence="4" ref="2">
    <original>P</original>
    <variation>Q</variation>
    <location>
        <position position="130"/>
    </location>
</feature>
<feature type="sequence conflict" description="In Ref. 3; AAA40002." evidence="4" ref="3">
    <original>R</original>
    <variation>K</variation>
    <location>
        <position position="159"/>
    </location>
</feature>
<feature type="sequence conflict" description="In Ref. 3; AAA40002." evidence="4" ref="3">
    <original>Y</original>
    <variation>S</variation>
    <location>
        <position position="202"/>
    </location>
</feature>
<feature type="sequence conflict" description="In Ref. 3; AAA40002." evidence="4" ref="3">
    <original>G</original>
    <variation>A</variation>
    <location>
        <position position="224"/>
    </location>
</feature>
<feature type="sequence conflict" description="In Ref. 2; AAA40005." evidence="4" ref="2">
    <original>Q</original>
    <variation>P</variation>
    <location>
        <position position="310"/>
    </location>
</feature>
<organism>
    <name type="scientific">Mus musculus</name>
    <name type="common">Mouse</name>
    <dbReference type="NCBI Taxonomy" id="10090"/>
    <lineage>
        <taxon>Eukaryota</taxon>
        <taxon>Metazoa</taxon>
        <taxon>Chordata</taxon>
        <taxon>Craniata</taxon>
        <taxon>Vertebrata</taxon>
        <taxon>Euteleostomi</taxon>
        <taxon>Mammalia</taxon>
        <taxon>Eutheria</taxon>
        <taxon>Euarchontoglires</taxon>
        <taxon>Glires</taxon>
        <taxon>Rodentia</taxon>
        <taxon>Myomorpha</taxon>
        <taxon>Muroidea</taxon>
        <taxon>Muridae</taxon>
        <taxon>Murinae</taxon>
        <taxon>Mus</taxon>
        <taxon>Mus</taxon>
    </lineage>
</organism>
<sequence>MLVVLFTVALLALSSAQGPREELQNQIQIPNQRPPPSGSQPRPPVNGSQQGPPPPGGPQPRPPQGPPPPGGPQPRPPQGPPPPGGPQPRPPQGPPPPGGPQPRPPQGPPPPGGPQPRPPQGPPPPGGPQPRPPQGPPPPGGPQQRPPQGPPPPGGPQPRPPQGPPPPAGPQPRPPQGPPPPAGPHLRPTQGPPPTGGPQQRYPQSPPPPGGPQPRPPQGPPPPGGPHPRPTQGPPPTGPQPRPTQGPPPTGGPQQRPPQGPPPPGGPQPRPPQGPPPPTGPQPRPTQGPHPTGGPQQTPPLAGNPQGPPQGRPQGPQ</sequence>
<proteinExistence type="evidence at transcript level"/>
<dbReference type="EMBL" id="M23236">
    <property type="protein sequence ID" value="AAA53048.1"/>
    <property type="molecule type" value="Genomic_DNA"/>
</dbReference>
<dbReference type="EMBL" id="M12100">
    <property type="protein sequence ID" value="AAA40005.1"/>
    <property type="molecule type" value="Genomic_DNA"/>
</dbReference>
<dbReference type="EMBL" id="M19419">
    <property type="protein sequence ID" value="AAA40002.1"/>
    <property type="molecule type" value="mRNA"/>
</dbReference>
<dbReference type="PIR" id="A28996">
    <property type="entry name" value="A28996"/>
</dbReference>
<dbReference type="PIR" id="D29149">
    <property type="entry name" value="D29149"/>
</dbReference>
<dbReference type="STRING" id="10090.ENSMUSP00000075435"/>
<dbReference type="GlyCosmos" id="P05143">
    <property type="glycosylation" value="1 site, No reported glycans"/>
</dbReference>
<dbReference type="GlyGen" id="P05143">
    <property type="glycosylation" value="8 sites"/>
</dbReference>
<dbReference type="PaxDb" id="10090-ENSMUSP00000075435"/>
<dbReference type="AGR" id="MGI:1932491"/>
<dbReference type="MGI" id="MGI:1932491">
    <property type="gene designation" value="Prp2"/>
</dbReference>
<dbReference type="InParanoid" id="P05143"/>
<dbReference type="PRO" id="PR:P05143"/>
<dbReference type="Proteomes" id="UP000000589">
    <property type="component" value="Unplaced"/>
</dbReference>
<dbReference type="RNAct" id="P05143">
    <property type="molecule type" value="protein"/>
</dbReference>
<dbReference type="GO" id="GO:0005576">
    <property type="term" value="C:extracellular region"/>
    <property type="evidence" value="ECO:0007669"/>
    <property type="project" value="UniProtKB-SubCell"/>
</dbReference>
<dbReference type="InterPro" id="IPR026086">
    <property type="entry name" value="Pro-rich"/>
</dbReference>
<dbReference type="PANTHER" id="PTHR23203">
    <property type="entry name" value="PROLINE-RICH PROTEIN"/>
    <property type="match status" value="1"/>
</dbReference>
<dbReference type="PANTHER" id="PTHR23203:SF21">
    <property type="entry name" value="PROLINE-RICH PROTEIN 2-RELATED"/>
    <property type="match status" value="1"/>
</dbReference>
<dbReference type="PRINTS" id="PR01217">
    <property type="entry name" value="PRICHEXTENSN"/>
</dbReference>
<dbReference type="SMART" id="SM01412">
    <property type="entry name" value="Pro-rich"/>
    <property type="match status" value="1"/>
</dbReference>
<gene>
    <name type="primary">Prp2</name>
    <name type="synonym">Prh1</name>
    <name type="synonym">Prp</name>
</gene>
<comment type="subcellular location">
    <subcellularLocation>
        <location evidence="4">Secreted</location>
    </subcellularLocation>
</comment>
<comment type="alternative products">
    <event type="alternative splicing"/>
    <isoform>
        <id>P05143-1</id>
        <name>1</name>
        <sequence type="displayed"/>
    </isoform>
    <isoform>
        <id>P05143-2</id>
        <name>2</name>
        <sequence type="described" ref="VSP_026929"/>
    </isoform>
</comment>
<name>PRP2_MOUSE</name>
<reference key="1">
    <citation type="journal article" date="1988" name="J. Biol. Chem.">
        <title>Molecular evolution of the mouse proline-rich protein multigene family. Insertion of a long interspersed repeated DNA element.</title>
        <authorList>
            <person name="Ann D.K."/>
            <person name="Smith M.K."/>
            <person name="Carlson D.M."/>
        </authorList>
    </citation>
    <scope>NUCLEOTIDE SEQUENCE [GENOMIC DNA] (ISOFORM 1)</scope>
    <source>
        <strain>CD-1</strain>
        <tissue>Liver</tissue>
    </source>
</reference>
<reference key="2">
    <citation type="journal article" date="1985" name="J. Biol. Chem.">
        <title>The structure and organization of a proline-rich protein gene of a mouse multigene family.</title>
        <authorList>
            <person name="Ann D.K."/>
            <person name="Carlson D.M."/>
        </authorList>
    </citation>
    <scope>NUCLEOTIDE SEQUENCE [GENOMIC DNA] OF 22-317 (ISOFORM 1)</scope>
</reference>
<reference key="3">
    <citation type="journal article" date="1985" name="J. Biol. Chem.">
        <title>Novel multigene families encoding highly repetitive peptide sequences. Sequence analyses of rat and mouse proline-rich protein cDNAs.</title>
        <authorList>
            <person name="Clements S."/>
            <person name="Mehansho H."/>
            <person name="Carlson D.M."/>
        </authorList>
    </citation>
    <scope>NUCLEOTIDE SEQUENCE [MRNA] OF 116-317 (ISOFORM 2)</scope>
</reference>
<evidence type="ECO:0000255" key="1"/>
<evidence type="ECO:0000256" key="2">
    <source>
        <dbReference type="SAM" id="MobiDB-lite"/>
    </source>
</evidence>
<evidence type="ECO:0000303" key="3">
    <source>
    </source>
</evidence>
<evidence type="ECO:0000305" key="4"/>